<organism>
    <name type="scientific">Physcomitrium patens</name>
    <name type="common">Spreading-leaved earth moss</name>
    <name type="synonym">Physcomitrella patens</name>
    <dbReference type="NCBI Taxonomy" id="3218"/>
    <lineage>
        <taxon>Eukaryota</taxon>
        <taxon>Viridiplantae</taxon>
        <taxon>Streptophyta</taxon>
        <taxon>Embryophyta</taxon>
        <taxon>Bryophyta</taxon>
        <taxon>Bryophytina</taxon>
        <taxon>Bryopsida</taxon>
        <taxon>Funariidae</taxon>
        <taxon>Funariales</taxon>
        <taxon>Funariaceae</taxon>
        <taxon>Physcomitrium</taxon>
    </lineage>
</organism>
<feature type="chain" id="PRO_0000391520" description="CASP-like protein UU2">
    <location>
        <begin position="1"/>
        <end position="213"/>
    </location>
</feature>
<feature type="topological domain" description="Cytoplasmic" evidence="2">
    <location>
        <begin position="1"/>
        <end position="53"/>
    </location>
</feature>
<feature type="transmembrane region" description="Helical" evidence="2">
    <location>
        <begin position="54"/>
        <end position="74"/>
    </location>
</feature>
<feature type="topological domain" description="Extracellular" evidence="2">
    <location>
        <begin position="75"/>
        <end position="96"/>
    </location>
</feature>
<feature type="transmembrane region" description="Helical" evidence="2">
    <location>
        <begin position="97"/>
        <end position="117"/>
    </location>
</feature>
<feature type="topological domain" description="Cytoplasmic" evidence="2">
    <location>
        <begin position="118"/>
        <end position="137"/>
    </location>
</feature>
<feature type="transmembrane region" description="Helical" evidence="2">
    <location>
        <begin position="138"/>
        <end position="158"/>
    </location>
</feature>
<feature type="topological domain" description="Extracellular" evidence="2">
    <location>
        <begin position="159"/>
        <end position="184"/>
    </location>
</feature>
<feature type="transmembrane region" description="Helical" evidence="2">
    <location>
        <begin position="185"/>
        <end position="205"/>
    </location>
</feature>
<feature type="topological domain" description="Cytoplasmic" evidence="2">
    <location>
        <begin position="206"/>
        <end position="213"/>
    </location>
</feature>
<feature type="region of interest" description="Disordered" evidence="3">
    <location>
        <begin position="1"/>
        <end position="26"/>
    </location>
</feature>
<feature type="compositionally biased region" description="Basic and acidic residues" evidence="3">
    <location>
        <begin position="14"/>
        <end position="25"/>
    </location>
</feature>
<feature type="glycosylation site" description="N-linked (GlcNAc...) asparagine" evidence="2">
    <location>
        <position position="90"/>
    </location>
</feature>
<name>CSPL5_PHYPA</name>
<accession>A9SHQ9</accession>
<proteinExistence type="evidence at transcript level"/>
<evidence type="ECO:0000250" key="1"/>
<evidence type="ECO:0000255" key="2"/>
<evidence type="ECO:0000256" key="3">
    <source>
        <dbReference type="SAM" id="MobiDB-lite"/>
    </source>
</evidence>
<evidence type="ECO:0000305" key="4"/>
<gene>
    <name type="ORF">PHYPADRAFT_164940</name>
</gene>
<comment type="subunit">
    <text evidence="1">Homodimer and heterodimers.</text>
</comment>
<comment type="subcellular location">
    <subcellularLocation>
        <location evidence="1">Cell membrane</location>
        <topology evidence="1">Multi-pass membrane protein</topology>
    </subcellularLocation>
</comment>
<comment type="similarity">
    <text evidence="4">Belongs to the Casparian strip membrane proteins (CASP) family.</text>
</comment>
<dbReference type="EMBL" id="DS544969">
    <property type="protein sequence ID" value="EDQ69268.1"/>
    <property type="molecule type" value="Genomic_DNA"/>
</dbReference>
<dbReference type="RefSeq" id="XP_001765947.1">
    <property type="nucleotide sequence ID" value="XM_001765895.1"/>
</dbReference>
<dbReference type="PaxDb" id="3218-PP1S80_45V6.1"/>
<dbReference type="EnsemblPlants" id="Pp3c11_18000V3.1">
    <property type="protein sequence ID" value="Pp3c11_18000V3.1"/>
    <property type="gene ID" value="Pp3c11_18000"/>
</dbReference>
<dbReference type="EnsemblPlants" id="Pp3c11_18000V3.2">
    <property type="protein sequence ID" value="Pp3c11_18000V3.2"/>
    <property type="gene ID" value="Pp3c11_18000"/>
</dbReference>
<dbReference type="Gramene" id="Pp3c11_18000V3.1">
    <property type="protein sequence ID" value="Pp3c11_18000V3.1"/>
    <property type="gene ID" value="Pp3c11_18000"/>
</dbReference>
<dbReference type="Gramene" id="Pp3c11_18000V3.2">
    <property type="protein sequence ID" value="Pp3c11_18000V3.2"/>
    <property type="gene ID" value="Pp3c11_18000"/>
</dbReference>
<dbReference type="HOGENOM" id="CLU_1296251_0_0_1"/>
<dbReference type="InParanoid" id="A9SHQ9"/>
<dbReference type="Proteomes" id="UP000006727">
    <property type="component" value="Chromosome 11"/>
</dbReference>
<dbReference type="GO" id="GO:0005886">
    <property type="term" value="C:plasma membrane"/>
    <property type="evidence" value="ECO:0007669"/>
    <property type="project" value="UniProtKB-SubCell"/>
</dbReference>
<dbReference type="InterPro" id="IPR006702">
    <property type="entry name" value="CASP_dom"/>
</dbReference>
<dbReference type="PANTHER" id="PTHR33573:SF50">
    <property type="entry name" value="CASP-LIKE PROTEIN 4A3"/>
    <property type="match status" value="1"/>
</dbReference>
<dbReference type="PANTHER" id="PTHR33573">
    <property type="entry name" value="CASP-LIKE PROTEIN 4A4"/>
    <property type="match status" value="1"/>
</dbReference>
<dbReference type="Pfam" id="PF04535">
    <property type="entry name" value="CASP_dom"/>
    <property type="match status" value="1"/>
</dbReference>
<protein>
    <recommendedName>
        <fullName>CASP-like protein UU2</fullName>
        <shortName>PpCASPLUU2</shortName>
    </recommendedName>
</protein>
<sequence length="213" mass="22665">MEDPKGAWQSDVFDNGRDFKPHDKAPANVTAGTTPPMYNVGAGGSEGNSKALSIISIVLRCLSIMFNVVSLGVIASNQGKSYFVVWRTLNSSNMQYLFAINVIVLVYCVVQLILSIINLVQGKMVLSGPTQPASTITYICDQGLTYMLMAGFGAGVALQASVDKGESGMLDCSGANEFCGKNKASAALSFLGFVCIALSANLNYLRLYFMAAK</sequence>
<keyword id="KW-1003">Cell membrane</keyword>
<keyword id="KW-0325">Glycoprotein</keyword>
<keyword id="KW-0472">Membrane</keyword>
<keyword id="KW-1185">Reference proteome</keyword>
<keyword id="KW-0812">Transmembrane</keyword>
<keyword id="KW-1133">Transmembrane helix</keyword>
<reference key="1">
    <citation type="journal article" date="2008" name="Science">
        <title>The Physcomitrella genome reveals evolutionary insights into the conquest of land by plants.</title>
        <authorList>
            <person name="Rensing S.A."/>
            <person name="Lang D."/>
            <person name="Zimmer A.D."/>
            <person name="Terry A."/>
            <person name="Salamov A."/>
            <person name="Shapiro H."/>
            <person name="Nishiyama T."/>
            <person name="Perroud P.-F."/>
            <person name="Lindquist E.A."/>
            <person name="Kamisugi Y."/>
            <person name="Tanahashi T."/>
            <person name="Sakakibara K."/>
            <person name="Fujita T."/>
            <person name="Oishi K."/>
            <person name="Shin-I T."/>
            <person name="Kuroki Y."/>
            <person name="Toyoda A."/>
            <person name="Suzuki Y."/>
            <person name="Hashimoto S.-I."/>
            <person name="Yamaguchi K."/>
            <person name="Sugano S."/>
            <person name="Kohara Y."/>
            <person name="Fujiyama A."/>
            <person name="Anterola A."/>
            <person name="Aoki S."/>
            <person name="Ashton N."/>
            <person name="Barbazuk W.B."/>
            <person name="Barker E."/>
            <person name="Bennetzen J.L."/>
            <person name="Blankenship R."/>
            <person name="Cho S.H."/>
            <person name="Dutcher S.K."/>
            <person name="Estelle M."/>
            <person name="Fawcett J.A."/>
            <person name="Gundlach H."/>
            <person name="Hanada K."/>
            <person name="Heyl A."/>
            <person name="Hicks K.A."/>
            <person name="Hughes J."/>
            <person name="Lohr M."/>
            <person name="Mayer K."/>
            <person name="Melkozernov A."/>
            <person name="Murata T."/>
            <person name="Nelson D.R."/>
            <person name="Pils B."/>
            <person name="Prigge M."/>
            <person name="Reiss B."/>
            <person name="Renner T."/>
            <person name="Rombauts S."/>
            <person name="Rushton P.J."/>
            <person name="Sanderfoot A."/>
            <person name="Schween G."/>
            <person name="Shiu S.-H."/>
            <person name="Stueber K."/>
            <person name="Theodoulou F.L."/>
            <person name="Tu H."/>
            <person name="Van de Peer Y."/>
            <person name="Verrier P.J."/>
            <person name="Waters E."/>
            <person name="Wood A."/>
            <person name="Yang L."/>
            <person name="Cove D."/>
            <person name="Cuming A.C."/>
            <person name="Hasebe M."/>
            <person name="Lucas S."/>
            <person name="Mishler B.D."/>
            <person name="Reski R."/>
            <person name="Grigoriev I.V."/>
            <person name="Quatrano R.S."/>
            <person name="Boore J.L."/>
        </authorList>
    </citation>
    <scope>NUCLEOTIDE SEQUENCE [LARGE SCALE GENOMIC DNA]</scope>
    <source>
        <strain>cv. Gransden 2004</strain>
    </source>
</reference>
<reference key="2">
    <citation type="journal article" date="2014" name="Plant Physiol.">
        <title>Functional and evolutionary analysis of the CASPARIAN STRIP MEMBRANE DOMAIN PROTEIN family.</title>
        <authorList>
            <person name="Roppolo D."/>
            <person name="Boeckmann B."/>
            <person name="Pfister A."/>
            <person name="Boutet E."/>
            <person name="Rubio M.C."/>
            <person name="Denervaud-Tendon V."/>
            <person name="Vermeer J.E."/>
            <person name="Gheyselinck J."/>
            <person name="Xenarios I."/>
            <person name="Geldner N."/>
        </authorList>
    </citation>
    <scope>GENE FAMILY</scope>
    <scope>NOMENCLATURE</scope>
</reference>